<protein>
    <recommendedName>
        <fullName>Tubulin alpha chain</fullName>
        <ecNumber evidence="2">3.6.5.-</ecNumber>
    </recommendedName>
</protein>
<keyword id="KW-0007">Acetylation</keyword>
<keyword id="KW-0963">Cytoplasm</keyword>
<keyword id="KW-0206">Cytoskeleton</keyword>
<keyword id="KW-0342">GTP-binding</keyword>
<keyword id="KW-0378">Hydrolase</keyword>
<keyword id="KW-0460">Magnesium</keyword>
<keyword id="KW-0479">Metal-binding</keyword>
<keyword id="KW-0493">Microtubule</keyword>
<keyword id="KW-0547">Nucleotide-binding</keyword>
<sequence>MRECISIHVGQAGVQIGNACWELYCLEHGIQPSGQMPSDKAVGGKDDSFNTFFSETGSGKHVPRAVFVDLEPTVVDEIRTGLYRQLFHPEQLITGKEDAANNYARGHYTIGKEHIDLVLDRVRKLSDQCTGLQGFLIFHSFGGGTGSGFTSLLMERLSVDYGKKSKLEFSIYPAPQVATAVVEPYNSILTTHTTLEHSDCAFMVDNEAIYDICKRNLDIERPSYTNLNRLISQVVSSITASLRFDGALNVDLTEFQTNLVPYPRIHFPLVTYAPIISAEKAYHEQLAVAEVTSACFEPANQMVKCDPRHGKYMACCMLYRGDVVPKDVNAAIATIKTKRSIQFVDWCPTGFKVGINYQPPTVVPGGDLAKVQRAVCMLSNTTAVAEAWARLDHKFDLMYAKRAFVHWYVGEGMEEGEFSEAREDLAALEKDYEEVGLDTFEAEEEEGGDEY</sequence>
<comment type="function">
    <text>Tubulin is the major constituent of microtubules, a cylinder consisting of laterally associated linear protofilaments composed of alpha- and beta-tubulin heterodimers. Microtubules grow by the addition of GTP-tubulin dimers to the microtubule end, where a stabilizing cap forms. Below the cap, tubulin dimers are in GDP-bound state, owing to GTPase activity of alpha-tubulin.</text>
</comment>
<comment type="catalytic activity">
    <reaction evidence="2">
        <text>GTP + H2O = GDP + phosphate + H(+)</text>
        <dbReference type="Rhea" id="RHEA:19669"/>
        <dbReference type="ChEBI" id="CHEBI:15377"/>
        <dbReference type="ChEBI" id="CHEBI:15378"/>
        <dbReference type="ChEBI" id="CHEBI:37565"/>
        <dbReference type="ChEBI" id="CHEBI:43474"/>
        <dbReference type="ChEBI" id="CHEBI:58189"/>
    </reaction>
    <physiologicalReaction direction="left-to-right" evidence="2">
        <dbReference type="Rhea" id="RHEA:19670"/>
    </physiologicalReaction>
</comment>
<comment type="cofactor">
    <cofactor evidence="2">
        <name>Mg(2+)</name>
        <dbReference type="ChEBI" id="CHEBI:18420"/>
    </cofactor>
</comment>
<comment type="subunit">
    <text>Dimer of alpha and beta chains. A typical microtubule is a hollow water-filled tube with an outer diameter of 25 nm and an inner diameter of 15 nM. Alpha-beta heterodimers associate head-to-tail to form protofilaments running lengthwise along the microtubule wall with the beta-tubulin subunit facing the microtubule plus end conferring a structural polarity. Microtubules usually have 13 protofilaments but different protofilament numbers can be found in some organisms and specialized cells.</text>
</comment>
<comment type="subcellular location">
    <subcellularLocation>
        <location>Cytoplasm</location>
        <location>Cytoskeleton</location>
    </subcellularLocation>
</comment>
<comment type="tissue specificity">
    <text>Actively expressed in the lens but does not seem to be lens-specific.</text>
</comment>
<comment type="PTM">
    <text evidence="1">Undergoes a tyrosination/detyrosination cycle, the cyclic removal and re-addition of a C-terminal tyrosine residue by the enzymes tubulin tyrosine carboxypeptidase (TTCP) and tubulin tyrosine ligase (TTL), respectively.</text>
</comment>
<comment type="PTM">
    <text evidence="1">Acetylation of alpha chains at Lys-40 stabilizes microtubules and affects affinity and processivity of microtubule motors. This modification has a role in multiple cellular functions, ranging from cell motility, cell cycle progression or cell differentiation to intracellular trafficking and signaling (By similarity).</text>
</comment>
<comment type="similarity">
    <text evidence="3">Belongs to the tubulin family.</text>
</comment>
<accession>Q06331</accession>
<reference key="1">
    <citation type="journal article" date="1993" name="Biochim. Biophys. Acta">
        <title>Primary structure and lens-specific expression of genes for an intermediate filament protein and a beta-tubulin in cephalopods.</title>
        <authorList>
            <person name="Tomarev S.I."/>
            <person name="Zinovieva R.D."/>
            <person name="Piatigorsky J."/>
        </authorList>
    </citation>
    <scope>NUCLEOTIDE SEQUENCE [MRNA]</scope>
    <source>
        <tissue>Lens</tissue>
    </source>
</reference>
<name>TBA_ENTDO</name>
<dbReference type="EC" id="3.6.5.-" evidence="2"/>
<dbReference type="EMBL" id="L10110">
    <property type="protein sequence ID" value="AAA16610.1"/>
    <property type="molecule type" value="mRNA"/>
</dbReference>
<dbReference type="PIR" id="S43425">
    <property type="entry name" value="S43425"/>
</dbReference>
<dbReference type="SMR" id="Q06331"/>
<dbReference type="GO" id="GO:0005737">
    <property type="term" value="C:cytoplasm"/>
    <property type="evidence" value="ECO:0007669"/>
    <property type="project" value="UniProtKB-KW"/>
</dbReference>
<dbReference type="GO" id="GO:0005874">
    <property type="term" value="C:microtubule"/>
    <property type="evidence" value="ECO:0007669"/>
    <property type="project" value="UniProtKB-KW"/>
</dbReference>
<dbReference type="GO" id="GO:0005525">
    <property type="term" value="F:GTP binding"/>
    <property type="evidence" value="ECO:0007669"/>
    <property type="project" value="UniProtKB-KW"/>
</dbReference>
<dbReference type="GO" id="GO:0016787">
    <property type="term" value="F:hydrolase activity"/>
    <property type="evidence" value="ECO:0007669"/>
    <property type="project" value="UniProtKB-KW"/>
</dbReference>
<dbReference type="GO" id="GO:0046872">
    <property type="term" value="F:metal ion binding"/>
    <property type="evidence" value="ECO:0007669"/>
    <property type="project" value="UniProtKB-KW"/>
</dbReference>
<dbReference type="GO" id="GO:0005200">
    <property type="term" value="F:structural constituent of cytoskeleton"/>
    <property type="evidence" value="ECO:0007669"/>
    <property type="project" value="InterPro"/>
</dbReference>
<dbReference type="GO" id="GO:0007017">
    <property type="term" value="P:microtubule-based process"/>
    <property type="evidence" value="ECO:0007669"/>
    <property type="project" value="InterPro"/>
</dbReference>
<dbReference type="CDD" id="cd02186">
    <property type="entry name" value="alpha_tubulin"/>
    <property type="match status" value="1"/>
</dbReference>
<dbReference type="FunFam" id="1.10.287.600:FF:000005">
    <property type="entry name" value="Tubulin alpha chain"/>
    <property type="match status" value="1"/>
</dbReference>
<dbReference type="FunFam" id="3.30.1330.20:FF:000001">
    <property type="entry name" value="Tubulin alpha chain"/>
    <property type="match status" value="1"/>
</dbReference>
<dbReference type="FunFam" id="3.40.50.1440:FF:000002">
    <property type="entry name" value="Tubulin alpha chain"/>
    <property type="match status" value="1"/>
</dbReference>
<dbReference type="Gene3D" id="1.10.287.600">
    <property type="entry name" value="Helix hairpin bin"/>
    <property type="match status" value="1"/>
</dbReference>
<dbReference type="Gene3D" id="3.30.1330.20">
    <property type="entry name" value="Tubulin/FtsZ, C-terminal domain"/>
    <property type="match status" value="1"/>
</dbReference>
<dbReference type="Gene3D" id="3.40.50.1440">
    <property type="entry name" value="Tubulin/FtsZ, GTPase domain"/>
    <property type="match status" value="1"/>
</dbReference>
<dbReference type="InterPro" id="IPR002452">
    <property type="entry name" value="Alpha_tubulin"/>
</dbReference>
<dbReference type="InterPro" id="IPR008280">
    <property type="entry name" value="Tub_FtsZ_C"/>
</dbReference>
<dbReference type="InterPro" id="IPR000217">
    <property type="entry name" value="Tubulin"/>
</dbReference>
<dbReference type="InterPro" id="IPR037103">
    <property type="entry name" value="Tubulin/FtsZ-like_C"/>
</dbReference>
<dbReference type="InterPro" id="IPR018316">
    <property type="entry name" value="Tubulin/FtsZ_2-layer-sand-dom"/>
</dbReference>
<dbReference type="InterPro" id="IPR036525">
    <property type="entry name" value="Tubulin/FtsZ_GTPase_sf"/>
</dbReference>
<dbReference type="InterPro" id="IPR023123">
    <property type="entry name" value="Tubulin_C"/>
</dbReference>
<dbReference type="InterPro" id="IPR017975">
    <property type="entry name" value="Tubulin_CS"/>
</dbReference>
<dbReference type="InterPro" id="IPR003008">
    <property type="entry name" value="Tubulin_FtsZ_GTPase"/>
</dbReference>
<dbReference type="PANTHER" id="PTHR11588">
    <property type="entry name" value="TUBULIN"/>
    <property type="match status" value="1"/>
</dbReference>
<dbReference type="Pfam" id="PF00091">
    <property type="entry name" value="Tubulin"/>
    <property type="match status" value="1"/>
</dbReference>
<dbReference type="Pfam" id="PF03953">
    <property type="entry name" value="Tubulin_C"/>
    <property type="match status" value="1"/>
</dbReference>
<dbReference type="PRINTS" id="PR01162">
    <property type="entry name" value="ALPHATUBULIN"/>
</dbReference>
<dbReference type="PRINTS" id="PR01161">
    <property type="entry name" value="TUBULIN"/>
</dbReference>
<dbReference type="SMART" id="SM00864">
    <property type="entry name" value="Tubulin"/>
    <property type="match status" value="1"/>
</dbReference>
<dbReference type="SMART" id="SM00865">
    <property type="entry name" value="Tubulin_C"/>
    <property type="match status" value="1"/>
</dbReference>
<dbReference type="SUPFAM" id="SSF55307">
    <property type="entry name" value="Tubulin C-terminal domain-like"/>
    <property type="match status" value="1"/>
</dbReference>
<dbReference type="SUPFAM" id="SSF52490">
    <property type="entry name" value="Tubulin nucleotide-binding domain-like"/>
    <property type="match status" value="1"/>
</dbReference>
<dbReference type="PROSITE" id="PS00227">
    <property type="entry name" value="TUBULIN"/>
    <property type="match status" value="1"/>
</dbReference>
<evidence type="ECO:0000250" key="1"/>
<evidence type="ECO:0000250" key="2">
    <source>
        <dbReference type="UniProtKB" id="P68363"/>
    </source>
</evidence>
<evidence type="ECO:0000305" key="3"/>
<proteinExistence type="evidence at transcript level"/>
<feature type="chain" id="PRO_0000048202" description="Tubulin alpha chain">
    <location>
        <begin position="1"/>
        <end position="451"/>
    </location>
</feature>
<feature type="active site" evidence="2">
    <location>
        <position position="254"/>
    </location>
</feature>
<feature type="binding site" evidence="2">
    <location>
        <position position="11"/>
    </location>
    <ligand>
        <name>GTP</name>
        <dbReference type="ChEBI" id="CHEBI:37565"/>
    </ligand>
</feature>
<feature type="binding site" evidence="2">
    <location>
        <position position="71"/>
    </location>
    <ligand>
        <name>GTP</name>
        <dbReference type="ChEBI" id="CHEBI:37565"/>
    </ligand>
</feature>
<feature type="binding site" evidence="2">
    <location>
        <position position="71"/>
    </location>
    <ligand>
        <name>Mg(2+)</name>
        <dbReference type="ChEBI" id="CHEBI:18420"/>
    </ligand>
</feature>
<feature type="binding site" evidence="2">
    <location>
        <position position="140"/>
    </location>
    <ligand>
        <name>GTP</name>
        <dbReference type="ChEBI" id="CHEBI:37565"/>
    </ligand>
</feature>
<feature type="binding site" evidence="2">
    <location>
        <position position="144"/>
    </location>
    <ligand>
        <name>GTP</name>
        <dbReference type="ChEBI" id="CHEBI:37565"/>
    </ligand>
</feature>
<feature type="binding site" evidence="2">
    <location>
        <position position="145"/>
    </location>
    <ligand>
        <name>GTP</name>
        <dbReference type="ChEBI" id="CHEBI:37565"/>
    </ligand>
</feature>
<feature type="binding site" evidence="2">
    <location>
        <position position="179"/>
    </location>
    <ligand>
        <name>GTP</name>
        <dbReference type="ChEBI" id="CHEBI:37565"/>
    </ligand>
</feature>
<feature type="binding site" evidence="2">
    <location>
        <position position="206"/>
    </location>
    <ligand>
        <name>GTP</name>
        <dbReference type="ChEBI" id="CHEBI:37565"/>
    </ligand>
</feature>
<feature type="binding site" evidence="2">
    <location>
        <position position="228"/>
    </location>
    <ligand>
        <name>GTP</name>
        <dbReference type="ChEBI" id="CHEBI:37565"/>
    </ligand>
</feature>
<feature type="site" description="Involved in polymerization">
    <location>
        <position position="451"/>
    </location>
</feature>
<feature type="modified residue" description="N6-acetyllysine" evidence="1">
    <location>
        <position position="40"/>
    </location>
</feature>
<organism>
    <name type="scientific">Enteroctopus dofleini</name>
    <name type="common">North Pacific giant octopus</name>
    <name type="synonym">Octopus dofleini</name>
    <dbReference type="NCBI Taxonomy" id="267067"/>
    <lineage>
        <taxon>Eukaryota</taxon>
        <taxon>Metazoa</taxon>
        <taxon>Spiralia</taxon>
        <taxon>Lophotrochozoa</taxon>
        <taxon>Mollusca</taxon>
        <taxon>Cephalopoda</taxon>
        <taxon>Coleoidea</taxon>
        <taxon>Octopodiformes</taxon>
        <taxon>Octopoda</taxon>
        <taxon>Incirrata</taxon>
        <taxon>Octopodidae</taxon>
        <taxon>Enteroctopus</taxon>
    </lineage>
</organism>